<comment type="function">
    <text evidence="3">Binds calcium in vitro.</text>
</comment>
<comment type="subcellular location">
    <subcellularLocation>
        <location evidence="3">Cytoplasm</location>
        <location evidence="3">Cytosol</location>
    </subcellularLocation>
</comment>
<comment type="tissue specificity">
    <text evidence="3">Expressed in roots and flowers.</text>
</comment>
<comment type="induction">
    <text evidence="2 3">Induced by salt stress.</text>
</comment>
<comment type="sequence caution" evidence="5">
    <conflict type="frameshift">
        <sequence resource="EMBL-CDS" id="AAC27657"/>
    </conflict>
</comment>
<gene>
    <name evidence="4" type="primary">CP1</name>
    <name evidence="7" type="synonym">ACP1</name>
    <name evidence="6" type="ordered locus">At5g49480</name>
    <name evidence="8" type="ORF">K6M13.2</name>
</gene>
<accession>Q9FDX6</accession>
<accession>O22368</accession>
<keyword id="KW-0106">Calcium</keyword>
<keyword id="KW-0963">Cytoplasm</keyword>
<keyword id="KW-0479">Metal-binding</keyword>
<keyword id="KW-1185">Reference proteome</keyword>
<keyword id="KW-0677">Repeat</keyword>
<evidence type="ECO:0000255" key="1">
    <source>
        <dbReference type="PROSITE-ProRule" id="PRU00448"/>
    </source>
</evidence>
<evidence type="ECO:0000269" key="2">
    <source>
    </source>
</evidence>
<evidence type="ECO:0000269" key="3">
    <source>
    </source>
</evidence>
<evidence type="ECO:0000303" key="4">
    <source>
    </source>
</evidence>
<evidence type="ECO:0000305" key="5"/>
<evidence type="ECO:0000312" key="6">
    <source>
        <dbReference type="Araport" id="AT5G49480"/>
    </source>
</evidence>
<evidence type="ECO:0000312" key="7">
    <source>
        <dbReference type="EMBL" id="AAC27657.1"/>
    </source>
</evidence>
<evidence type="ECO:0000312" key="8">
    <source>
        <dbReference type="EMBL" id="BAB10761.1"/>
    </source>
</evidence>
<reference key="1">
    <citation type="journal article" date="1998" name="Plant Mol. Biol.">
        <title>Molecular cloning of a novel Ca2+-binding protein that is induced by NaCl stress.</title>
        <authorList>
            <person name="Jang H.J."/>
            <person name="Pih K.T."/>
            <person name="Kang S.G."/>
            <person name="Lim J.H."/>
            <person name="Jin J.B."/>
            <person name="Piao H.L."/>
            <person name="Hwang I."/>
        </authorList>
    </citation>
    <scope>NUCLEOTIDE SEQUENCE [MRNA]</scope>
    <scope>FUNCTION</scope>
    <scope>SUBCELLULAR LOCATION</scope>
    <scope>TISSUE SPECIFICITY</scope>
    <scope>INDUCTION BY SALT STRESS</scope>
    <source>
        <strain>cv. Columbia</strain>
    </source>
</reference>
<reference key="2">
    <citation type="journal article" date="2000" name="DNA Res.">
        <title>Structural analysis of Arabidopsis thaliana chromosome 5. X. Sequence features of the regions of 3,076,755 bp covered by sixty P1 and TAC clones.</title>
        <authorList>
            <person name="Sato S."/>
            <person name="Nakamura Y."/>
            <person name="Kaneko T."/>
            <person name="Katoh T."/>
            <person name="Asamizu E."/>
            <person name="Kotani H."/>
            <person name="Tabata S."/>
        </authorList>
    </citation>
    <scope>NUCLEOTIDE SEQUENCE [LARGE SCALE GENOMIC DNA]</scope>
    <source>
        <strain>cv. Columbia</strain>
    </source>
</reference>
<reference key="3">
    <citation type="journal article" date="2017" name="Plant J.">
        <title>Araport11: a complete reannotation of the Arabidopsis thaliana reference genome.</title>
        <authorList>
            <person name="Cheng C.Y."/>
            <person name="Krishnakumar V."/>
            <person name="Chan A.P."/>
            <person name="Thibaud-Nissen F."/>
            <person name="Schobel S."/>
            <person name="Town C.D."/>
        </authorList>
    </citation>
    <scope>GENOME REANNOTATION</scope>
    <source>
        <strain>cv. Columbia</strain>
    </source>
</reference>
<reference key="4">
    <citation type="journal article" date="2003" name="Science">
        <title>Empirical analysis of transcriptional activity in the Arabidopsis genome.</title>
        <authorList>
            <person name="Yamada K."/>
            <person name="Lim J."/>
            <person name="Dale J.M."/>
            <person name="Chen H."/>
            <person name="Shinn P."/>
            <person name="Palm C.J."/>
            <person name="Southwick A.M."/>
            <person name="Wu H.C."/>
            <person name="Kim C.J."/>
            <person name="Nguyen M."/>
            <person name="Pham P.K."/>
            <person name="Cheuk R.F."/>
            <person name="Karlin-Newmann G."/>
            <person name="Liu S.X."/>
            <person name="Lam B."/>
            <person name="Sakano H."/>
            <person name="Wu T."/>
            <person name="Yu G."/>
            <person name="Miranda M."/>
            <person name="Quach H.L."/>
            <person name="Tripp M."/>
            <person name="Chang C.H."/>
            <person name="Lee J.M."/>
            <person name="Toriumi M.J."/>
            <person name="Chan M.M."/>
            <person name="Tang C.C."/>
            <person name="Onodera C.S."/>
            <person name="Deng J.M."/>
            <person name="Akiyama K."/>
            <person name="Ansari Y."/>
            <person name="Arakawa T."/>
            <person name="Banh J."/>
            <person name="Banno F."/>
            <person name="Bowser L."/>
            <person name="Brooks S.Y."/>
            <person name="Carninci P."/>
            <person name="Chao Q."/>
            <person name="Choy N."/>
            <person name="Enju A."/>
            <person name="Goldsmith A.D."/>
            <person name="Gurjal M."/>
            <person name="Hansen N.F."/>
            <person name="Hayashizaki Y."/>
            <person name="Johnson-Hopson C."/>
            <person name="Hsuan V.W."/>
            <person name="Iida K."/>
            <person name="Karnes M."/>
            <person name="Khan S."/>
            <person name="Koesema E."/>
            <person name="Ishida J."/>
            <person name="Jiang P.X."/>
            <person name="Jones T."/>
            <person name="Kawai J."/>
            <person name="Kamiya A."/>
            <person name="Meyers C."/>
            <person name="Nakajima M."/>
            <person name="Narusaka M."/>
            <person name="Seki M."/>
            <person name="Sakurai T."/>
            <person name="Satou M."/>
            <person name="Tamse R."/>
            <person name="Vaysberg M."/>
            <person name="Wallender E.K."/>
            <person name="Wong C."/>
            <person name="Yamamura Y."/>
            <person name="Yuan S."/>
            <person name="Shinozaki K."/>
            <person name="Davis R.W."/>
            <person name="Theologis A."/>
            <person name="Ecker J.R."/>
        </authorList>
    </citation>
    <scope>NUCLEOTIDE SEQUENCE [LARGE SCALE MRNA]</scope>
    <source>
        <strain>cv. Columbia</strain>
    </source>
</reference>
<reference key="5">
    <citation type="journal article" date="2001" name="Plant Physiol.">
        <title>Genes that are uniquely stress regulated in salt overly sensitive (sos) mutants.</title>
        <authorList>
            <person name="Gong Z."/>
            <person name="Koiwa H."/>
            <person name="Cushman M.A."/>
            <person name="Ray A."/>
            <person name="Bufford D."/>
            <person name="Kore-eda S."/>
            <person name="Matsumoto T.K."/>
            <person name="Zhu J."/>
            <person name="Cushman J.C."/>
            <person name="Bressan R.A."/>
            <person name="Hasegawa P.M."/>
        </authorList>
    </citation>
    <scope>INDUCTION BY SALT STRESS</scope>
</reference>
<name>CP1_ARATH</name>
<dbReference type="EMBL" id="AF009228">
    <property type="protein sequence ID" value="AAC27657.1"/>
    <property type="status" value="ALT_FRAME"/>
    <property type="molecule type" value="mRNA"/>
</dbReference>
<dbReference type="EMBL" id="AB023033">
    <property type="protein sequence ID" value="BAB10761.1"/>
    <property type="molecule type" value="Genomic_DNA"/>
</dbReference>
<dbReference type="EMBL" id="CP002688">
    <property type="protein sequence ID" value="AED95819.1"/>
    <property type="molecule type" value="Genomic_DNA"/>
</dbReference>
<dbReference type="EMBL" id="AF325028">
    <property type="protein sequence ID" value="AAG40380.1"/>
    <property type="molecule type" value="mRNA"/>
</dbReference>
<dbReference type="EMBL" id="AF378884">
    <property type="protein sequence ID" value="AAK55687.1"/>
    <property type="molecule type" value="mRNA"/>
</dbReference>
<dbReference type="EMBL" id="AY052740">
    <property type="protein sequence ID" value="AAK96454.1"/>
    <property type="molecule type" value="mRNA"/>
</dbReference>
<dbReference type="RefSeq" id="NP_199759.1">
    <property type="nucleotide sequence ID" value="NM_124325.3"/>
</dbReference>
<dbReference type="SMR" id="Q9FDX6"/>
<dbReference type="FunCoup" id="Q9FDX6">
    <property type="interactions" value="580"/>
</dbReference>
<dbReference type="STRING" id="3702.Q9FDX6"/>
<dbReference type="iPTMnet" id="Q9FDX6"/>
<dbReference type="PaxDb" id="3702-AT5G49480.1"/>
<dbReference type="ProteomicsDB" id="224400"/>
<dbReference type="EnsemblPlants" id="AT5G49480.1">
    <property type="protein sequence ID" value="AT5G49480.1"/>
    <property type="gene ID" value="AT5G49480"/>
</dbReference>
<dbReference type="GeneID" id="835008"/>
<dbReference type="Gramene" id="AT5G49480.1">
    <property type="protein sequence ID" value="AT5G49480.1"/>
    <property type="gene ID" value="AT5G49480"/>
</dbReference>
<dbReference type="KEGG" id="ath:AT5G49480"/>
<dbReference type="Araport" id="AT5G49480"/>
<dbReference type="TAIR" id="AT5G49480">
    <property type="gene designation" value="CP1"/>
</dbReference>
<dbReference type="eggNOG" id="KOG0027">
    <property type="taxonomic scope" value="Eukaryota"/>
</dbReference>
<dbReference type="HOGENOM" id="CLU_1689852_0_0_1"/>
<dbReference type="InParanoid" id="Q9FDX6"/>
<dbReference type="OMA" id="EMEGMIS"/>
<dbReference type="PhylomeDB" id="Q9FDX6"/>
<dbReference type="PRO" id="PR:Q9FDX6"/>
<dbReference type="Proteomes" id="UP000006548">
    <property type="component" value="Chromosome 5"/>
</dbReference>
<dbReference type="ExpressionAtlas" id="Q9FDX6">
    <property type="expression patterns" value="baseline and differential"/>
</dbReference>
<dbReference type="GO" id="GO:0005829">
    <property type="term" value="C:cytosol"/>
    <property type="evidence" value="ECO:0000314"/>
    <property type="project" value="TAIR"/>
</dbReference>
<dbReference type="GO" id="GO:0009536">
    <property type="term" value="C:plastid"/>
    <property type="evidence" value="ECO:0007005"/>
    <property type="project" value="TAIR"/>
</dbReference>
<dbReference type="GO" id="GO:0005509">
    <property type="term" value="F:calcium ion binding"/>
    <property type="evidence" value="ECO:0000314"/>
    <property type="project" value="TAIR"/>
</dbReference>
<dbReference type="GO" id="GO:0042538">
    <property type="term" value="P:hyperosmotic salinity response"/>
    <property type="evidence" value="ECO:0000270"/>
    <property type="project" value="TAIR"/>
</dbReference>
<dbReference type="CDD" id="cd00051">
    <property type="entry name" value="EFh"/>
    <property type="match status" value="2"/>
</dbReference>
<dbReference type="FunFam" id="1.10.238.10:FF:000298">
    <property type="entry name" value="Calcium-binding protein CP1"/>
    <property type="match status" value="1"/>
</dbReference>
<dbReference type="Gene3D" id="1.10.238.10">
    <property type="entry name" value="EF-hand"/>
    <property type="match status" value="2"/>
</dbReference>
<dbReference type="InterPro" id="IPR050145">
    <property type="entry name" value="Centrin_CML-like"/>
</dbReference>
<dbReference type="InterPro" id="IPR011992">
    <property type="entry name" value="EF-hand-dom_pair"/>
</dbReference>
<dbReference type="InterPro" id="IPR018247">
    <property type="entry name" value="EF_Hand_1_Ca_BS"/>
</dbReference>
<dbReference type="InterPro" id="IPR002048">
    <property type="entry name" value="EF_hand_dom"/>
</dbReference>
<dbReference type="PANTHER" id="PTHR23050">
    <property type="entry name" value="CALCIUM BINDING PROTEIN"/>
    <property type="match status" value="1"/>
</dbReference>
<dbReference type="Pfam" id="PF13499">
    <property type="entry name" value="EF-hand_7"/>
    <property type="match status" value="2"/>
</dbReference>
<dbReference type="SMART" id="SM00054">
    <property type="entry name" value="EFh"/>
    <property type="match status" value="3"/>
</dbReference>
<dbReference type="SUPFAM" id="SSF47473">
    <property type="entry name" value="EF-hand"/>
    <property type="match status" value="1"/>
</dbReference>
<dbReference type="PROSITE" id="PS00018">
    <property type="entry name" value="EF_HAND_1"/>
    <property type="match status" value="3"/>
</dbReference>
<dbReference type="PROSITE" id="PS50222">
    <property type="entry name" value="EF_HAND_2"/>
    <property type="match status" value="3"/>
</dbReference>
<protein>
    <recommendedName>
        <fullName>Calcium-binding protein CP1</fullName>
    </recommendedName>
    <alternativeName>
        <fullName evidence="4">NaCl-inducible Ca2+-binding protein</fullName>
        <shortName evidence="4">AtCP1</shortName>
    </alternativeName>
</protein>
<sequence>MCPSGRIAIPITTTANPNFRPAFEIIDTDHDGKISSDDLRAFYAGIPSGENNDETMIGTMISVADANKDGFVEFDEFEKVLETTPFSRSGNGGDDGLMKDVFKVMDKDGDGRLSYGDLKSYMDSAGLAVTDDEIKSMIRLAGGDLNDGVSFDGLLKIFGC</sequence>
<proteinExistence type="evidence at transcript level"/>
<feature type="chain" id="PRO_0000443502" description="Calcium-binding protein CP1">
    <location>
        <begin position="1"/>
        <end position="160"/>
    </location>
</feature>
<feature type="domain" description="EF-hand 1" evidence="1">
    <location>
        <begin position="22"/>
        <end position="49"/>
    </location>
</feature>
<feature type="domain" description="EF-hand 2" evidence="1">
    <location>
        <begin position="52"/>
        <end position="87"/>
    </location>
</feature>
<feature type="domain" description="EF-hand 3" evidence="1">
    <location>
        <begin position="93"/>
        <end position="128"/>
    </location>
</feature>
<feature type="binding site" evidence="1">
    <location>
        <position position="27"/>
    </location>
    <ligand>
        <name>Ca(2+)</name>
        <dbReference type="ChEBI" id="CHEBI:29108"/>
        <label>1</label>
    </ligand>
</feature>
<feature type="binding site" evidence="1">
    <location>
        <position position="29"/>
    </location>
    <ligand>
        <name>Ca(2+)</name>
        <dbReference type="ChEBI" id="CHEBI:29108"/>
        <label>1</label>
    </ligand>
</feature>
<feature type="binding site" evidence="1">
    <location>
        <position position="31"/>
    </location>
    <ligand>
        <name>Ca(2+)</name>
        <dbReference type="ChEBI" id="CHEBI:29108"/>
        <label>1</label>
    </ligand>
</feature>
<feature type="binding site" evidence="1">
    <location>
        <position position="33"/>
    </location>
    <ligand>
        <name>Ca(2+)</name>
        <dbReference type="ChEBI" id="CHEBI:29108"/>
        <label>1</label>
    </ligand>
</feature>
<feature type="binding site" evidence="1">
    <location>
        <position position="38"/>
    </location>
    <ligand>
        <name>Ca(2+)</name>
        <dbReference type="ChEBI" id="CHEBI:29108"/>
        <label>1</label>
    </ligand>
</feature>
<feature type="binding site" evidence="1">
    <location>
        <position position="65"/>
    </location>
    <ligand>
        <name>Ca(2+)</name>
        <dbReference type="ChEBI" id="CHEBI:29108"/>
        <label>2</label>
    </ligand>
</feature>
<feature type="binding site" evidence="1">
    <location>
        <position position="67"/>
    </location>
    <ligand>
        <name>Ca(2+)</name>
        <dbReference type="ChEBI" id="CHEBI:29108"/>
        <label>2</label>
    </ligand>
</feature>
<feature type="binding site" evidence="1">
    <location>
        <position position="69"/>
    </location>
    <ligand>
        <name>Ca(2+)</name>
        <dbReference type="ChEBI" id="CHEBI:29108"/>
        <label>2</label>
    </ligand>
</feature>
<feature type="binding site" evidence="1">
    <location>
        <position position="76"/>
    </location>
    <ligand>
        <name>Ca(2+)</name>
        <dbReference type="ChEBI" id="CHEBI:29108"/>
        <label>2</label>
    </ligand>
</feature>
<feature type="binding site" evidence="1">
    <location>
        <position position="106"/>
    </location>
    <ligand>
        <name>Ca(2+)</name>
        <dbReference type="ChEBI" id="CHEBI:29108"/>
        <label>3</label>
    </ligand>
</feature>
<feature type="binding site" evidence="1">
    <location>
        <position position="108"/>
    </location>
    <ligand>
        <name>Ca(2+)</name>
        <dbReference type="ChEBI" id="CHEBI:29108"/>
        <label>3</label>
    </ligand>
</feature>
<feature type="binding site" evidence="1">
    <location>
        <position position="110"/>
    </location>
    <ligand>
        <name>Ca(2+)</name>
        <dbReference type="ChEBI" id="CHEBI:29108"/>
        <label>3</label>
    </ligand>
</feature>
<feature type="binding site" evidence="1">
    <location>
        <position position="112"/>
    </location>
    <ligand>
        <name>Ca(2+)</name>
        <dbReference type="ChEBI" id="CHEBI:29108"/>
        <label>3</label>
    </ligand>
</feature>
<feature type="binding site" evidence="1">
    <location>
        <position position="117"/>
    </location>
    <ligand>
        <name>Ca(2+)</name>
        <dbReference type="ChEBI" id="CHEBI:29108"/>
        <label>3</label>
    </ligand>
</feature>
<organism>
    <name type="scientific">Arabidopsis thaliana</name>
    <name type="common">Mouse-ear cress</name>
    <dbReference type="NCBI Taxonomy" id="3702"/>
    <lineage>
        <taxon>Eukaryota</taxon>
        <taxon>Viridiplantae</taxon>
        <taxon>Streptophyta</taxon>
        <taxon>Embryophyta</taxon>
        <taxon>Tracheophyta</taxon>
        <taxon>Spermatophyta</taxon>
        <taxon>Magnoliopsida</taxon>
        <taxon>eudicotyledons</taxon>
        <taxon>Gunneridae</taxon>
        <taxon>Pentapetalae</taxon>
        <taxon>rosids</taxon>
        <taxon>malvids</taxon>
        <taxon>Brassicales</taxon>
        <taxon>Brassicaceae</taxon>
        <taxon>Camelineae</taxon>
        <taxon>Arabidopsis</taxon>
    </lineage>
</organism>